<name>RS12_MYCBP</name>
<evidence type="ECO:0000250" key="1"/>
<evidence type="ECO:0000255" key="2">
    <source>
        <dbReference type="HAMAP-Rule" id="MF_00403"/>
    </source>
</evidence>
<evidence type="ECO:0000256" key="3">
    <source>
        <dbReference type="SAM" id="MobiDB-lite"/>
    </source>
</evidence>
<evidence type="ECO:0000305" key="4"/>
<keyword id="KW-0488">Methylation</keyword>
<keyword id="KW-0687">Ribonucleoprotein</keyword>
<keyword id="KW-0689">Ribosomal protein</keyword>
<keyword id="KW-0694">RNA-binding</keyword>
<keyword id="KW-0699">rRNA-binding</keyword>
<keyword id="KW-0820">tRNA-binding</keyword>
<reference key="1">
    <citation type="journal article" date="2007" name="Proc. Natl. Acad. Sci. U.S.A.">
        <title>Genome plasticity of BCG and impact on vaccine efficacy.</title>
        <authorList>
            <person name="Brosch R."/>
            <person name="Gordon S.V."/>
            <person name="Garnier T."/>
            <person name="Eiglmeier K."/>
            <person name="Frigui W."/>
            <person name="Valenti P."/>
            <person name="Dos Santos S."/>
            <person name="Duthoy S."/>
            <person name="Lacroix C."/>
            <person name="Garcia-Pelayo C."/>
            <person name="Inwald J.K."/>
            <person name="Golby P."/>
            <person name="Garcia J.N."/>
            <person name="Hewinson R.G."/>
            <person name="Behr M.A."/>
            <person name="Quail M.A."/>
            <person name="Churcher C."/>
            <person name="Barrell B.G."/>
            <person name="Parkhill J."/>
            <person name="Cole S.T."/>
        </authorList>
    </citation>
    <scope>NUCLEOTIDE SEQUENCE [LARGE SCALE GENOMIC DNA]</scope>
    <source>
        <strain>BCG / Pasteur 1173P2</strain>
    </source>
</reference>
<protein>
    <recommendedName>
        <fullName evidence="2">Small ribosomal subunit protein uS12</fullName>
    </recommendedName>
    <alternativeName>
        <fullName evidence="4">30S ribosomal protein S12</fullName>
    </alternativeName>
</protein>
<dbReference type="EMBL" id="AM408590">
    <property type="protein sequence ID" value="CAL70717.1"/>
    <property type="molecule type" value="Genomic_DNA"/>
</dbReference>
<dbReference type="RefSeq" id="WP_003403453.1">
    <property type="nucleotide sequence ID" value="NC_008769.1"/>
</dbReference>
<dbReference type="SMR" id="A1KGG2"/>
<dbReference type="GeneID" id="45424644"/>
<dbReference type="KEGG" id="mbb:BCG_0731"/>
<dbReference type="HOGENOM" id="CLU_104295_1_2_11"/>
<dbReference type="Proteomes" id="UP000001472">
    <property type="component" value="Chromosome"/>
</dbReference>
<dbReference type="GO" id="GO:0015935">
    <property type="term" value="C:small ribosomal subunit"/>
    <property type="evidence" value="ECO:0007669"/>
    <property type="project" value="InterPro"/>
</dbReference>
<dbReference type="GO" id="GO:0019843">
    <property type="term" value="F:rRNA binding"/>
    <property type="evidence" value="ECO:0007669"/>
    <property type="project" value="UniProtKB-UniRule"/>
</dbReference>
<dbReference type="GO" id="GO:0003735">
    <property type="term" value="F:structural constituent of ribosome"/>
    <property type="evidence" value="ECO:0007669"/>
    <property type="project" value="InterPro"/>
</dbReference>
<dbReference type="GO" id="GO:0000049">
    <property type="term" value="F:tRNA binding"/>
    <property type="evidence" value="ECO:0007669"/>
    <property type="project" value="UniProtKB-UniRule"/>
</dbReference>
<dbReference type="GO" id="GO:0006412">
    <property type="term" value="P:translation"/>
    <property type="evidence" value="ECO:0007669"/>
    <property type="project" value="UniProtKB-UniRule"/>
</dbReference>
<dbReference type="CDD" id="cd03368">
    <property type="entry name" value="Ribosomal_S12"/>
    <property type="match status" value="1"/>
</dbReference>
<dbReference type="FunFam" id="2.40.50.140:FF:000001">
    <property type="entry name" value="30S ribosomal protein S12"/>
    <property type="match status" value="1"/>
</dbReference>
<dbReference type="Gene3D" id="2.40.50.140">
    <property type="entry name" value="Nucleic acid-binding proteins"/>
    <property type="match status" value="1"/>
</dbReference>
<dbReference type="HAMAP" id="MF_00403_B">
    <property type="entry name" value="Ribosomal_uS12_B"/>
    <property type="match status" value="1"/>
</dbReference>
<dbReference type="InterPro" id="IPR012340">
    <property type="entry name" value="NA-bd_OB-fold"/>
</dbReference>
<dbReference type="InterPro" id="IPR006032">
    <property type="entry name" value="Ribosomal_uS12"/>
</dbReference>
<dbReference type="InterPro" id="IPR005679">
    <property type="entry name" value="Ribosomal_uS12_bac"/>
</dbReference>
<dbReference type="NCBIfam" id="TIGR00981">
    <property type="entry name" value="rpsL_bact"/>
    <property type="match status" value="1"/>
</dbReference>
<dbReference type="PANTHER" id="PTHR11652">
    <property type="entry name" value="30S RIBOSOMAL PROTEIN S12 FAMILY MEMBER"/>
    <property type="match status" value="1"/>
</dbReference>
<dbReference type="Pfam" id="PF00164">
    <property type="entry name" value="Ribosom_S12_S23"/>
    <property type="match status" value="1"/>
</dbReference>
<dbReference type="PIRSF" id="PIRSF002133">
    <property type="entry name" value="Ribosomal_S12/S23"/>
    <property type="match status" value="1"/>
</dbReference>
<dbReference type="PRINTS" id="PR01034">
    <property type="entry name" value="RIBOSOMALS12"/>
</dbReference>
<dbReference type="SUPFAM" id="SSF50249">
    <property type="entry name" value="Nucleic acid-binding proteins"/>
    <property type="match status" value="1"/>
</dbReference>
<dbReference type="PROSITE" id="PS00055">
    <property type="entry name" value="RIBOSOMAL_S12"/>
    <property type="match status" value="1"/>
</dbReference>
<feature type="chain" id="PRO_0000296000" description="Small ribosomal subunit protein uS12">
    <location>
        <begin position="1"/>
        <end position="124"/>
    </location>
</feature>
<feature type="region of interest" description="Disordered" evidence="3">
    <location>
        <begin position="105"/>
        <end position="124"/>
    </location>
</feature>
<feature type="compositionally biased region" description="Basic residues" evidence="3">
    <location>
        <begin position="108"/>
        <end position="118"/>
    </location>
</feature>
<feature type="modified residue" description="3-methylthioaspartic acid" evidence="1">
    <location>
        <position position="89"/>
    </location>
</feature>
<accession>A1KGG2</accession>
<sequence>MPTIQQLVRKGRRDKISKVKTAALKGSPQRRGVCTRVYTTTPKKPNSALRKVARVKLTSQVEVTAYIPGEGHNLQEHSMVLVRGGRVKDLPGVRYKIIRGSLDTQGVKNRKQARSRYGAKKEKG</sequence>
<comment type="function">
    <text evidence="2">With S4 and S5 plays an important role in translational accuracy.</text>
</comment>
<comment type="function">
    <text evidence="2">Interacts with and stabilizes bases of the 16S rRNA that are involved in tRNA selection in the A site and with the mRNA backbone. Located at the interface of the 30S and 50S subunits, it traverses the body of the 30S subunit contacting proteins on the other side and probably holding the rRNA structure together. The combined cluster of proteins S8, S12 and S17 appears to hold together the shoulder and platform of the 30S subunit.</text>
</comment>
<comment type="subunit">
    <text evidence="2">Part of the 30S ribosomal subunit. Contacts proteins S8 and S17. May interact with IF1 in the 30S initiation complex.</text>
</comment>
<comment type="similarity">
    <text evidence="2">Belongs to the universal ribosomal protein uS12 family.</text>
</comment>
<organism>
    <name type="scientific">Mycobacterium bovis (strain BCG / Pasteur 1173P2)</name>
    <dbReference type="NCBI Taxonomy" id="410289"/>
    <lineage>
        <taxon>Bacteria</taxon>
        <taxon>Bacillati</taxon>
        <taxon>Actinomycetota</taxon>
        <taxon>Actinomycetes</taxon>
        <taxon>Mycobacteriales</taxon>
        <taxon>Mycobacteriaceae</taxon>
        <taxon>Mycobacterium</taxon>
        <taxon>Mycobacterium tuberculosis complex</taxon>
    </lineage>
</organism>
<gene>
    <name evidence="2" type="primary">rpsL</name>
    <name type="ordered locus">BCG_0731</name>
</gene>
<proteinExistence type="inferred from homology"/>